<comment type="function">
    <text evidence="1">Involved in unsaturated fatty acids biosynthesis. Catalyzes the dehydration of short chain beta-hydroxyacyl-ACPs and long chain saturated and unsaturated beta-hydroxyacyl-ACPs.</text>
</comment>
<comment type="catalytic activity">
    <reaction evidence="1">
        <text>a (3R)-hydroxyacyl-[ACP] = a (2E)-enoyl-[ACP] + H2O</text>
        <dbReference type="Rhea" id="RHEA:13097"/>
        <dbReference type="Rhea" id="RHEA-COMP:9925"/>
        <dbReference type="Rhea" id="RHEA-COMP:9945"/>
        <dbReference type="ChEBI" id="CHEBI:15377"/>
        <dbReference type="ChEBI" id="CHEBI:78784"/>
        <dbReference type="ChEBI" id="CHEBI:78827"/>
        <dbReference type="EC" id="4.2.1.59"/>
    </reaction>
</comment>
<comment type="subcellular location">
    <subcellularLocation>
        <location evidence="1">Cytoplasm</location>
    </subcellularLocation>
</comment>
<comment type="similarity">
    <text evidence="1">Belongs to the thioester dehydratase family. FabZ subfamily.</text>
</comment>
<keyword id="KW-0963">Cytoplasm</keyword>
<keyword id="KW-0441">Lipid A biosynthesis</keyword>
<keyword id="KW-0444">Lipid biosynthesis</keyword>
<keyword id="KW-0443">Lipid metabolism</keyword>
<keyword id="KW-0456">Lyase</keyword>
<reference key="1">
    <citation type="submission" date="2007-04" db="EMBL/GenBank/DDBJ databases">
        <title>Genome sequence of the thermophilic hydrogen-producing bacterium Caldicellulosiruptor saccharolyticus DSM 8903.</title>
        <authorList>
            <person name="Copeland A."/>
            <person name="Lucas S."/>
            <person name="Lapidus A."/>
            <person name="Barry K."/>
            <person name="Detter J.C."/>
            <person name="Glavina del Rio T."/>
            <person name="Hammon N."/>
            <person name="Israni S."/>
            <person name="Dalin E."/>
            <person name="Tice H."/>
            <person name="Pitluck S."/>
            <person name="Kiss H."/>
            <person name="Brettin T."/>
            <person name="Bruce D."/>
            <person name="Han C."/>
            <person name="Schmutz J."/>
            <person name="Larimer F."/>
            <person name="Land M."/>
            <person name="Hauser L."/>
            <person name="Kyrpides N."/>
            <person name="Lykidis A."/>
            <person name="van de Werken H.J.G."/>
            <person name="Verhaart M.R.A."/>
            <person name="VanFossen A.L."/>
            <person name="Lewis D.L."/>
            <person name="Nichols J.D."/>
            <person name="Goorissen H.P."/>
            <person name="van Niel E.W.J."/>
            <person name="Stams F.J.M."/>
            <person name="Willquist K.U."/>
            <person name="Ward D.E."/>
            <person name="van der Oost J."/>
            <person name="Kelly R.M."/>
            <person name="Kengen S.M.W."/>
            <person name="Richardson P."/>
        </authorList>
    </citation>
    <scope>NUCLEOTIDE SEQUENCE [LARGE SCALE GENOMIC DNA]</scope>
    <source>
        <strain>ATCC 43494 / DSM 8903 / Tp8T 6331</strain>
    </source>
</reference>
<gene>
    <name evidence="1" type="primary">fabZ</name>
    <name type="ordered locus">Csac_1364</name>
</gene>
<proteinExistence type="inferred from homology"/>
<sequence length="140" mass="15476">MYDVTSILQILPHRYPFLLVDRIIEIEEGKKAKGIKNVTINEPFFQGHFPGNPVMPGVLIVEAMAQVGAVAILSKEEFKGKTPFFAGIDKVRFKKVVRPGDVLLIETELISLKGYIGKAKATAYVEGEVVCEGELLFAIK</sequence>
<accession>A4XJ81</accession>
<name>FABZ_CALS8</name>
<protein>
    <recommendedName>
        <fullName evidence="1">3-hydroxyacyl-[acyl-carrier-protein] dehydratase FabZ</fullName>
        <ecNumber evidence="1">4.2.1.59</ecNumber>
    </recommendedName>
    <alternativeName>
        <fullName evidence="1">(3R)-hydroxymyristoyl-[acyl-carrier-protein] dehydratase</fullName>
        <shortName evidence="1">(3R)-hydroxymyristoyl-ACP dehydrase</shortName>
    </alternativeName>
    <alternativeName>
        <fullName evidence="1">Beta-hydroxyacyl-ACP dehydratase</fullName>
    </alternativeName>
</protein>
<dbReference type="EC" id="4.2.1.59" evidence="1"/>
<dbReference type="EMBL" id="CP000679">
    <property type="protein sequence ID" value="ABP66966.1"/>
    <property type="molecule type" value="Genomic_DNA"/>
</dbReference>
<dbReference type="RefSeq" id="WP_011916902.1">
    <property type="nucleotide sequence ID" value="NC_009437.1"/>
</dbReference>
<dbReference type="SMR" id="A4XJ81"/>
<dbReference type="STRING" id="351627.Csac_1364"/>
<dbReference type="KEGG" id="csc:Csac_1364"/>
<dbReference type="eggNOG" id="COG0764">
    <property type="taxonomic scope" value="Bacteria"/>
</dbReference>
<dbReference type="HOGENOM" id="CLU_078912_3_0_9"/>
<dbReference type="OrthoDB" id="9772788at2"/>
<dbReference type="Proteomes" id="UP000000256">
    <property type="component" value="Chromosome"/>
</dbReference>
<dbReference type="GO" id="GO:0005737">
    <property type="term" value="C:cytoplasm"/>
    <property type="evidence" value="ECO:0007669"/>
    <property type="project" value="UniProtKB-SubCell"/>
</dbReference>
<dbReference type="GO" id="GO:0016020">
    <property type="term" value="C:membrane"/>
    <property type="evidence" value="ECO:0007669"/>
    <property type="project" value="GOC"/>
</dbReference>
<dbReference type="GO" id="GO:0019171">
    <property type="term" value="F:(3R)-hydroxyacyl-[acyl-carrier-protein] dehydratase activity"/>
    <property type="evidence" value="ECO:0007669"/>
    <property type="project" value="UniProtKB-EC"/>
</dbReference>
<dbReference type="GO" id="GO:0006633">
    <property type="term" value="P:fatty acid biosynthetic process"/>
    <property type="evidence" value="ECO:0007669"/>
    <property type="project" value="UniProtKB-UniRule"/>
</dbReference>
<dbReference type="GO" id="GO:0009245">
    <property type="term" value="P:lipid A biosynthetic process"/>
    <property type="evidence" value="ECO:0007669"/>
    <property type="project" value="UniProtKB-UniRule"/>
</dbReference>
<dbReference type="CDD" id="cd01288">
    <property type="entry name" value="FabZ"/>
    <property type="match status" value="1"/>
</dbReference>
<dbReference type="FunFam" id="3.10.129.10:FF:000001">
    <property type="entry name" value="3-hydroxyacyl-[acyl-carrier-protein] dehydratase FabZ"/>
    <property type="match status" value="1"/>
</dbReference>
<dbReference type="Gene3D" id="3.10.129.10">
    <property type="entry name" value="Hotdog Thioesterase"/>
    <property type="match status" value="1"/>
</dbReference>
<dbReference type="HAMAP" id="MF_00406">
    <property type="entry name" value="FabZ"/>
    <property type="match status" value="1"/>
</dbReference>
<dbReference type="InterPro" id="IPR013114">
    <property type="entry name" value="FabA_FabZ"/>
</dbReference>
<dbReference type="InterPro" id="IPR010084">
    <property type="entry name" value="FabZ"/>
</dbReference>
<dbReference type="InterPro" id="IPR029069">
    <property type="entry name" value="HotDog_dom_sf"/>
</dbReference>
<dbReference type="NCBIfam" id="TIGR01750">
    <property type="entry name" value="fabZ"/>
    <property type="match status" value="1"/>
</dbReference>
<dbReference type="NCBIfam" id="NF000582">
    <property type="entry name" value="PRK00006.1"/>
    <property type="match status" value="1"/>
</dbReference>
<dbReference type="PANTHER" id="PTHR30272">
    <property type="entry name" value="3-HYDROXYACYL-[ACYL-CARRIER-PROTEIN] DEHYDRATASE"/>
    <property type="match status" value="1"/>
</dbReference>
<dbReference type="PANTHER" id="PTHR30272:SF1">
    <property type="entry name" value="3-HYDROXYACYL-[ACYL-CARRIER-PROTEIN] DEHYDRATASE"/>
    <property type="match status" value="1"/>
</dbReference>
<dbReference type="Pfam" id="PF07977">
    <property type="entry name" value="FabA"/>
    <property type="match status" value="1"/>
</dbReference>
<dbReference type="SUPFAM" id="SSF54637">
    <property type="entry name" value="Thioesterase/thiol ester dehydrase-isomerase"/>
    <property type="match status" value="1"/>
</dbReference>
<feature type="chain" id="PRO_0000340762" description="3-hydroxyacyl-[acyl-carrier-protein] dehydratase FabZ">
    <location>
        <begin position="1"/>
        <end position="140"/>
    </location>
</feature>
<feature type="active site" evidence="1">
    <location>
        <position position="48"/>
    </location>
</feature>
<organism>
    <name type="scientific">Caldicellulosiruptor saccharolyticus (strain ATCC 43494 / DSM 8903 / Tp8T 6331)</name>
    <dbReference type="NCBI Taxonomy" id="351627"/>
    <lineage>
        <taxon>Bacteria</taxon>
        <taxon>Bacillati</taxon>
        <taxon>Bacillota</taxon>
        <taxon>Bacillota incertae sedis</taxon>
        <taxon>Caldicellulosiruptorales</taxon>
        <taxon>Caldicellulosiruptoraceae</taxon>
        <taxon>Caldicellulosiruptor</taxon>
    </lineage>
</organism>
<evidence type="ECO:0000255" key="1">
    <source>
        <dbReference type="HAMAP-Rule" id="MF_00406"/>
    </source>
</evidence>